<sequence length="359" mass="40513">MTVLIHVLGSDIPHHNHTVLRFFNDTLAATSEHAREFMVAGEDNGFTESCPALSLRFYGSKKALAQAVIAKAKANRRQRFFFHGQFNTSLWLALLSGGIKPAQFYWHIWGADLYEVSNGLKFRLFYPLRRIAQGRVGCVFATRGDLSYFARQHPDVRGELLYFPTRMDPSLNAMAKECQRAGKLTILVGNSGDRSNQHIAALRAVYQQFGDTVNVVVPMGYPANNQDYIDEVRQAGLALFSAENLQILSEKMEFDAYLALLRQCDLGYFIFARQQGIGTLCLLIQADIPCVLNRDNPFWQDMAEQHLPVLFTTDDLNEQVVREAQRQLASVDKSGITFFSPNYLQPWHNALRIAAGEAE</sequence>
<proteinExistence type="inferred from homology"/>
<dbReference type="EC" id="2.4.1.325" evidence="1"/>
<dbReference type="EMBL" id="CP001113">
    <property type="protein sequence ID" value="ACF62159.1"/>
    <property type="molecule type" value="Genomic_DNA"/>
</dbReference>
<dbReference type="RefSeq" id="WP_000217196.1">
    <property type="nucleotide sequence ID" value="NZ_CCMR01000001.1"/>
</dbReference>
<dbReference type="CAZy" id="GT56">
    <property type="family name" value="Glycosyltransferase Family 56"/>
</dbReference>
<dbReference type="KEGG" id="see:SNSL254_A4207"/>
<dbReference type="HOGENOM" id="CLU_066584_0_0_6"/>
<dbReference type="UniPathway" id="UPA00566"/>
<dbReference type="Proteomes" id="UP000008824">
    <property type="component" value="Chromosome"/>
</dbReference>
<dbReference type="GO" id="GO:0005886">
    <property type="term" value="C:plasma membrane"/>
    <property type="evidence" value="ECO:0007669"/>
    <property type="project" value="UniProtKB-SubCell"/>
</dbReference>
<dbReference type="GO" id="GO:0102031">
    <property type="term" value="F:4-acetamido-4,6-dideoxy-D-galactose transferase activity"/>
    <property type="evidence" value="ECO:0007669"/>
    <property type="project" value="UniProtKB-EC"/>
</dbReference>
<dbReference type="GO" id="GO:0008417">
    <property type="term" value="F:fucosyltransferase activity"/>
    <property type="evidence" value="ECO:0007669"/>
    <property type="project" value="InterPro"/>
</dbReference>
<dbReference type="GO" id="GO:0009246">
    <property type="term" value="P:enterobacterial common antigen biosynthetic process"/>
    <property type="evidence" value="ECO:0007669"/>
    <property type="project" value="UniProtKB-UniRule"/>
</dbReference>
<dbReference type="GO" id="GO:0036065">
    <property type="term" value="P:fucosylation"/>
    <property type="evidence" value="ECO:0007669"/>
    <property type="project" value="InterPro"/>
</dbReference>
<dbReference type="HAMAP" id="MF_01002">
    <property type="entry name" value="WecF_RffT"/>
    <property type="match status" value="1"/>
</dbReference>
<dbReference type="InterPro" id="IPR009993">
    <property type="entry name" value="WecF"/>
</dbReference>
<dbReference type="NCBIfam" id="NF002753">
    <property type="entry name" value="PRK02797.1-2"/>
    <property type="match status" value="1"/>
</dbReference>
<dbReference type="NCBIfam" id="NF002754">
    <property type="entry name" value="PRK02797.1-3"/>
    <property type="match status" value="1"/>
</dbReference>
<dbReference type="Pfam" id="PF07429">
    <property type="entry name" value="Glyco_transf_56"/>
    <property type="match status" value="1"/>
</dbReference>
<organism>
    <name type="scientific">Salmonella newport (strain SL254)</name>
    <dbReference type="NCBI Taxonomy" id="423368"/>
    <lineage>
        <taxon>Bacteria</taxon>
        <taxon>Pseudomonadati</taxon>
        <taxon>Pseudomonadota</taxon>
        <taxon>Gammaproteobacteria</taxon>
        <taxon>Enterobacterales</taxon>
        <taxon>Enterobacteriaceae</taxon>
        <taxon>Salmonella</taxon>
    </lineage>
</organism>
<gene>
    <name evidence="1" type="primary">wecF</name>
    <name evidence="1" type="synonym">rffT</name>
    <name type="ordered locus">SNSL254_A4207</name>
</gene>
<evidence type="ECO:0000255" key="1">
    <source>
        <dbReference type="HAMAP-Rule" id="MF_01002"/>
    </source>
</evidence>
<accession>B4SZ38</accession>
<name>WECF_SALNS</name>
<comment type="function">
    <text evidence="1">Catalyzes the synthesis of Und-PP-GlcNAc-ManNAcA-Fuc4NAc (Lipid III), the third lipid-linked intermediate involved in ECA synthesis.</text>
</comment>
<comment type="catalytic activity">
    <reaction evidence="1">
        <text>beta-D-ManNAcA-(1-&gt;4)-alpha-D-GlcNAc-di-trans,octa-cis-undecaprenyl diphosphate + dTDP-4-acetamido-4,6-dideoxy-alpha-D-galactose = alpha-D-FucNAc4-(1-&gt;4)-beta-D-ManNAcA-(1-&gt;4)-D-GlcNAc-undecaprenyl diphosphate + dTDP + H(+)</text>
        <dbReference type="Rhea" id="RHEA:28759"/>
        <dbReference type="ChEBI" id="CHEBI:15378"/>
        <dbReference type="ChEBI" id="CHEBI:58369"/>
        <dbReference type="ChEBI" id="CHEBI:61495"/>
        <dbReference type="ChEBI" id="CHEBI:61496"/>
        <dbReference type="ChEBI" id="CHEBI:68493"/>
        <dbReference type="EC" id="2.4.1.325"/>
    </reaction>
</comment>
<comment type="pathway">
    <text evidence="1">Bacterial outer membrane biogenesis; enterobacterial common antigen biosynthesis.</text>
</comment>
<comment type="subcellular location">
    <subcellularLocation>
        <location evidence="1">Cell inner membrane</location>
        <topology evidence="1">Peripheral membrane protein</topology>
    </subcellularLocation>
</comment>
<comment type="similarity">
    <text evidence="1">Belongs to the glycosyltransferase 56 family.</text>
</comment>
<feature type="chain" id="PRO_1000134608" description="TDP-N-acetylfucosamine:lipid II N-acetylfucosaminyltransferase">
    <location>
        <begin position="1"/>
        <end position="359"/>
    </location>
</feature>
<keyword id="KW-0997">Cell inner membrane</keyword>
<keyword id="KW-1003">Cell membrane</keyword>
<keyword id="KW-0328">Glycosyltransferase</keyword>
<keyword id="KW-0472">Membrane</keyword>
<keyword id="KW-0808">Transferase</keyword>
<protein>
    <recommendedName>
        <fullName evidence="1">TDP-N-acetylfucosamine:lipid II N-acetylfucosaminyltransferase</fullName>
        <ecNumber evidence="1">2.4.1.325</ecNumber>
    </recommendedName>
    <alternativeName>
        <fullName evidence="1">4-alpha-L-fucosyltransferase</fullName>
    </alternativeName>
    <alternativeName>
        <fullName evidence="1">TDP-Fuc4NAc:lipid II Fuc4NAc transferase</fullName>
        <shortName evidence="1">Fuc4NAc transferase</shortName>
    </alternativeName>
</protein>
<reference key="1">
    <citation type="journal article" date="2011" name="J. Bacteriol.">
        <title>Comparative genomics of 28 Salmonella enterica isolates: evidence for CRISPR-mediated adaptive sublineage evolution.</title>
        <authorList>
            <person name="Fricke W.F."/>
            <person name="Mammel M.K."/>
            <person name="McDermott P.F."/>
            <person name="Tartera C."/>
            <person name="White D.G."/>
            <person name="Leclerc J.E."/>
            <person name="Ravel J."/>
            <person name="Cebula T.A."/>
        </authorList>
    </citation>
    <scope>NUCLEOTIDE SEQUENCE [LARGE SCALE GENOMIC DNA]</scope>
    <source>
        <strain>SL254</strain>
    </source>
</reference>